<gene>
    <name type="primary">EPDR1</name>
    <name type="synonym">MERP1</name>
    <name type="ORF">QccE-12983</name>
    <name type="ORF">QmoA-12340</name>
    <name type="ORF">QmoA-13475</name>
    <name type="ORF">QtrA-11871</name>
</gene>
<keyword id="KW-1015">Disulfide bond</keyword>
<keyword id="KW-0325">Glycoprotein</keyword>
<keyword id="KW-0446">Lipid-binding</keyword>
<keyword id="KW-0458">Lysosome</keyword>
<keyword id="KW-1185">Reference proteome</keyword>
<keyword id="KW-0964">Secreted</keyword>
<keyword id="KW-0732">Signal</keyword>
<protein>
    <recommendedName>
        <fullName>Mammalian ependymin-related protein 1</fullName>
        <shortName>MERP-1</shortName>
    </recommendedName>
</protein>
<accession>Q9N0C7</accession>
<accession>Q95K54</accession>
<accession>Q95K77</accession>
<evidence type="ECO:0000250" key="1">
    <source>
        <dbReference type="UniProtKB" id="Q99M71"/>
    </source>
</evidence>
<evidence type="ECO:0000250" key="2">
    <source>
        <dbReference type="UniProtKB" id="Q9UM22"/>
    </source>
</evidence>
<evidence type="ECO:0000255" key="3"/>
<evidence type="ECO:0000305" key="4"/>
<name>EPDR1_MACFA</name>
<comment type="function">
    <text evidence="2">Binds anionic lipids and gangliosides at acidic pH.</text>
</comment>
<comment type="subunit">
    <text evidence="2">Homodimer.</text>
</comment>
<comment type="subcellular location">
    <subcellularLocation>
        <location evidence="2">Lysosome lumen</location>
    </subcellularLocation>
    <subcellularLocation>
        <location evidence="2">Secreted</location>
    </subcellularLocation>
    <text evidence="2">Lysosomal and also secreted.</text>
</comment>
<comment type="PTM">
    <text evidence="1">N-glycosylated; the glycan contains mannose-6-phosphate moieties.</text>
</comment>
<comment type="similarity">
    <text evidence="4">Belongs to the ependymin family.</text>
</comment>
<comment type="sequence caution" evidence="4">
    <conflict type="erroneous initiation">
        <sequence resource="EMBL-CDS" id="BAB01585"/>
    </conflict>
</comment>
<comment type="sequence caution" evidence="4">
    <conflict type="erroneous initiation">
        <sequence resource="EMBL-CDS" id="BAB60800"/>
    </conflict>
</comment>
<comment type="sequence caution" evidence="4">
    <conflict type="erroneous initiation">
        <sequence resource="EMBL-CDS" id="BAB62213"/>
    </conflict>
</comment>
<comment type="sequence caution" evidence="4">
    <conflict type="erroneous initiation">
        <sequence resource="EMBL-CDS" id="BAC41745"/>
    </conflict>
</comment>
<reference key="1">
    <citation type="submission" date="2000-07" db="EMBL/GenBank/DDBJ databases">
        <title>Isolation of full-length cDNA clones from macaque brain cDNA libraries.</title>
        <authorList>
            <person name="Osada N."/>
            <person name="Hida M."/>
            <person name="Kusuda J."/>
            <person name="Tanuma R."/>
            <person name="Iseki K."/>
            <person name="Hirai M."/>
            <person name="Terao K."/>
            <person name="Suzuki Y."/>
            <person name="Sugano S."/>
            <person name="Hashimoto K."/>
        </authorList>
    </citation>
    <scope>NUCLEOTIDE SEQUENCE [LARGE SCALE MRNA]</scope>
    <source>
        <tissue>Brain cortex</tissue>
        <tissue>Medulla oblongata</tissue>
        <tissue>Temporal cortex</tissue>
    </source>
</reference>
<reference key="2">
    <citation type="journal article" date="2001" name="Gene">
        <title>Assignment of 118 novel cDNAs of cynomolgus monkey brain to human chromosomes.</title>
        <authorList>
            <person name="Osada N."/>
            <person name="Hida M."/>
            <person name="Kususda J."/>
            <person name="Tanuma R."/>
            <person name="Iseki K."/>
            <person name="Hirata M."/>
            <person name="Suto Y."/>
            <person name="Hirai M."/>
            <person name="Terao K."/>
            <person name="Suzuki Y."/>
            <person name="Sugano S."/>
            <person name="Hashimoto K."/>
        </authorList>
    </citation>
    <scope>NUCLEOTIDE SEQUENCE [LARGE SCALE MRNA]</scope>
    <source>
        <tissue>Medulla oblongata</tissue>
    </source>
</reference>
<dbReference type="EMBL" id="AB046003">
    <property type="protein sequence ID" value="BAB01585.1"/>
    <property type="status" value="ALT_INIT"/>
    <property type="molecule type" value="mRNA"/>
</dbReference>
<dbReference type="EMBL" id="AB063094">
    <property type="protein sequence ID" value="BAB60800.1"/>
    <property type="status" value="ALT_INIT"/>
    <property type="molecule type" value="mRNA"/>
</dbReference>
<dbReference type="EMBL" id="AB066537">
    <property type="protein sequence ID" value="BAB62213.1"/>
    <property type="status" value="ALT_INIT"/>
    <property type="molecule type" value="mRNA"/>
</dbReference>
<dbReference type="EMBL" id="AB097520">
    <property type="protein sequence ID" value="BAC41745.1"/>
    <property type="status" value="ALT_INIT"/>
    <property type="molecule type" value="mRNA"/>
</dbReference>
<dbReference type="SMR" id="Q9N0C7"/>
<dbReference type="STRING" id="9541.ENSMFAP00000008808"/>
<dbReference type="GlyCosmos" id="Q9N0C7">
    <property type="glycosylation" value="2 sites, No reported glycans"/>
</dbReference>
<dbReference type="eggNOG" id="ENOG502QQ8T">
    <property type="taxonomic scope" value="Eukaryota"/>
</dbReference>
<dbReference type="Proteomes" id="UP000233100">
    <property type="component" value="Unplaced"/>
</dbReference>
<dbReference type="GO" id="GO:0005576">
    <property type="term" value="C:extracellular region"/>
    <property type="evidence" value="ECO:0007669"/>
    <property type="project" value="UniProtKB-SubCell"/>
</dbReference>
<dbReference type="GO" id="GO:0043202">
    <property type="term" value="C:lysosomal lumen"/>
    <property type="evidence" value="ECO:0007669"/>
    <property type="project" value="UniProtKB-SubCell"/>
</dbReference>
<dbReference type="GO" id="GO:0005509">
    <property type="term" value="F:calcium ion binding"/>
    <property type="evidence" value="ECO:0007669"/>
    <property type="project" value="InterPro"/>
</dbReference>
<dbReference type="GO" id="GO:0008289">
    <property type="term" value="F:lipid binding"/>
    <property type="evidence" value="ECO:0007669"/>
    <property type="project" value="UniProtKB-KW"/>
</dbReference>
<dbReference type="GO" id="GO:0007160">
    <property type="term" value="P:cell-matrix adhesion"/>
    <property type="evidence" value="ECO:0007669"/>
    <property type="project" value="InterPro"/>
</dbReference>
<dbReference type="InterPro" id="IPR001299">
    <property type="entry name" value="Ependymin"/>
</dbReference>
<dbReference type="InterPro" id="IPR018224">
    <property type="entry name" value="Ependymin_CS"/>
</dbReference>
<dbReference type="PANTHER" id="PTHR10697">
    <property type="entry name" value="MAMMALIAN EPENDYMIN-RELATED PROTEIN 1"/>
    <property type="match status" value="1"/>
</dbReference>
<dbReference type="PANTHER" id="PTHR10697:SF1">
    <property type="entry name" value="MAMMALIAN EPENDYMIN-RELATED PROTEIN 1"/>
    <property type="match status" value="1"/>
</dbReference>
<dbReference type="Pfam" id="PF00811">
    <property type="entry name" value="Ependymin"/>
    <property type="match status" value="1"/>
</dbReference>
<dbReference type="PRINTS" id="PR00317">
    <property type="entry name" value="EPENDYMIN"/>
</dbReference>
<dbReference type="SMART" id="SM00026">
    <property type="entry name" value="EPEND"/>
    <property type="match status" value="1"/>
</dbReference>
<dbReference type="PROSITE" id="PS00898">
    <property type="entry name" value="EPENDYMIN_1"/>
    <property type="match status" value="1"/>
</dbReference>
<dbReference type="PROSITE" id="PS00899">
    <property type="entry name" value="EPENDYMIN_2"/>
    <property type="match status" value="1"/>
</dbReference>
<sequence>MPGRAPLHTVPGALGPWLLGCLWAWTLCGLCSLGAVGAPRPCQAPQQWEGRQVMYQQSSGRNSRALLSYDGLNQRVRVLDERKALIPCKRLFEYILLYKDGVMFQIEQATKQCSKMTLTEPWDPLDIPQNSTFEDQYSIGGPQEQIMVQEWSDRKSARSYETWIGIYTVKDCYPVQETFTKNYSVILSTRFFDIQLGIKDPSVFTPPSTCQIAQLEKMSEDCSW</sequence>
<organism>
    <name type="scientific">Macaca fascicularis</name>
    <name type="common">Crab-eating macaque</name>
    <name type="synonym">Cynomolgus monkey</name>
    <dbReference type="NCBI Taxonomy" id="9541"/>
    <lineage>
        <taxon>Eukaryota</taxon>
        <taxon>Metazoa</taxon>
        <taxon>Chordata</taxon>
        <taxon>Craniata</taxon>
        <taxon>Vertebrata</taxon>
        <taxon>Euteleostomi</taxon>
        <taxon>Mammalia</taxon>
        <taxon>Eutheria</taxon>
        <taxon>Euarchontoglires</taxon>
        <taxon>Primates</taxon>
        <taxon>Haplorrhini</taxon>
        <taxon>Catarrhini</taxon>
        <taxon>Cercopithecidae</taxon>
        <taxon>Cercopithecinae</taxon>
        <taxon>Macaca</taxon>
    </lineage>
</organism>
<proteinExistence type="evidence at transcript level"/>
<feature type="signal peptide" evidence="3">
    <location>
        <begin position="1"/>
        <end position="37"/>
    </location>
</feature>
<feature type="chain" id="PRO_0000008352" description="Mammalian ependymin-related protein 1">
    <location>
        <begin position="38"/>
        <end position="224"/>
    </location>
</feature>
<feature type="glycosylation site" description="N-linked (GlcNAc...) asparagine" evidence="3">
    <location>
        <position position="130"/>
    </location>
</feature>
<feature type="glycosylation site" description="N-linked (GlcNAc...) asparagine" evidence="3">
    <location>
        <position position="182"/>
    </location>
</feature>
<feature type="disulfide bond" evidence="2">
    <location>
        <begin position="42"/>
        <end position="172"/>
    </location>
</feature>
<feature type="disulfide bond" evidence="2">
    <location>
        <begin position="88"/>
        <end position="222"/>
    </location>
</feature>
<feature type="disulfide bond" evidence="2">
    <location>
        <begin position="113"/>
        <end position="210"/>
    </location>
</feature>
<feature type="sequence conflict" description="In Ref. 1; BAB60800 and 2; BAC41745." evidence="4" ref="1 2">
    <original>Q</original>
    <variation>L</variation>
    <location>
        <position position="47"/>
    </location>
</feature>
<feature type="sequence conflict" description="In Ref. 1; BAB62213." evidence="4" ref="1">
    <original>V</original>
    <variation>L</variation>
    <location>
        <position position="76"/>
    </location>
</feature>
<feature type="sequence conflict" description="In Ref. 1; BAB01585." evidence="4" ref="1">
    <original>F</original>
    <variation>V</variation>
    <location>
        <position position="191"/>
    </location>
</feature>